<accession>Q196U5</accession>
<organism>
    <name type="scientific">Invertebrate iridescent virus 3</name>
    <name type="common">IIV-3</name>
    <name type="synonym">Mosquito iridescent virus</name>
    <dbReference type="NCBI Taxonomy" id="345201"/>
    <lineage>
        <taxon>Viruses</taxon>
        <taxon>Varidnaviria</taxon>
        <taxon>Bamfordvirae</taxon>
        <taxon>Nucleocytoviricota</taxon>
        <taxon>Megaviricetes</taxon>
        <taxon>Pimascovirales</taxon>
        <taxon>Iridoviridae</taxon>
        <taxon>Betairidovirinae</taxon>
        <taxon>Chloriridovirus</taxon>
    </lineage>
</organism>
<comment type="similarity">
    <text evidence="1">Belongs to the IIV-6 342R family.</text>
</comment>
<dbReference type="EMBL" id="DQ643392">
    <property type="protein sequence ID" value="ABF82145.1"/>
    <property type="molecule type" value="Genomic_DNA"/>
</dbReference>
<dbReference type="RefSeq" id="YP_654687.1">
    <property type="nucleotide sequence ID" value="NC_008187.1"/>
</dbReference>
<dbReference type="KEGG" id="vg:4156326"/>
<dbReference type="OrthoDB" id="19674at10239"/>
<dbReference type="Proteomes" id="UP000001358">
    <property type="component" value="Genome"/>
</dbReference>
<name>VF342_IIV3</name>
<sequence length="76" mass="8401">MDNSAQKSCSYTPVACYNAYTPAQQGFYVVPDYQTYGYQTLTSARAGALPSCSRYFSVQNAYGSCSTMSYVRKDCI</sequence>
<protein>
    <recommendedName>
        <fullName>Uncharacterized protein 115R</fullName>
    </recommendedName>
</protein>
<keyword id="KW-1185">Reference proteome</keyword>
<gene>
    <name type="ORF">IIV3-115R</name>
</gene>
<organismHost>
    <name type="scientific">Aedes vexans</name>
    <name type="common">Inland floodwater mosquito</name>
    <name type="synonym">Culex vexans</name>
    <dbReference type="NCBI Taxonomy" id="7163"/>
</organismHost>
<organismHost>
    <name type="scientific">Culex territans</name>
    <dbReference type="NCBI Taxonomy" id="42431"/>
</organismHost>
<organismHost>
    <name type="scientific">Culiseta annulata</name>
    <dbReference type="NCBI Taxonomy" id="332058"/>
</organismHost>
<organismHost>
    <name type="scientific">Ochlerotatus sollicitans</name>
    <name type="common">eastern saltmarsh mosquito</name>
    <dbReference type="NCBI Taxonomy" id="310513"/>
</organismHost>
<organismHost>
    <name type="scientific">Ochlerotatus taeniorhynchus</name>
    <name type="common">Black salt marsh mosquito</name>
    <name type="synonym">Aedes taeniorhynchus</name>
    <dbReference type="NCBI Taxonomy" id="329105"/>
</organismHost>
<organismHost>
    <name type="scientific">Psorophora ferox</name>
    <dbReference type="NCBI Taxonomy" id="7183"/>
</organismHost>
<evidence type="ECO:0000305" key="1"/>
<proteinExistence type="inferred from homology"/>
<reference key="1">
    <citation type="journal article" date="2006" name="J. Virol.">
        <title>Genome of invertebrate iridescent virus type 3 (mosquito iridescent virus).</title>
        <authorList>
            <person name="Delhon G."/>
            <person name="Tulman E.R."/>
            <person name="Afonso C.L."/>
            <person name="Lu Z."/>
            <person name="Becnel J.J."/>
            <person name="Moser B.A."/>
            <person name="Kutish G.F."/>
            <person name="Rock D.L."/>
        </authorList>
    </citation>
    <scope>NUCLEOTIDE SEQUENCE [LARGE SCALE GENOMIC DNA]</scope>
</reference>
<feature type="chain" id="PRO_0000377786" description="Uncharacterized protein 115R">
    <location>
        <begin position="1"/>
        <end position="76"/>
    </location>
</feature>